<accession>A6U0B2</accession>
<sequence length="269" mass="30769">MRYTILTKGDSKSNALKHKMMNYMKDFRMIEDSENPEIVISVGGDGTLLQAFHQYSHMLSKVAFVGVHTGHLGFYADWLPHEVEKLIIEINNSEFQVIEYPLLEIIMRYNDNGYETRYLALNEATMKTENGSTLVVDVNLRGKHFERFRGDGLCVSTPSGSTAYNKALGGALIHPSLEAMQITEIASINNRVFRTVGSPLVLPKHHTCLISPVNHDTIRMTIDHVSIKHKNVNSIQYRVANEKVRFARFRPFPFWKRVHDSFISSDEER</sequence>
<comment type="function">
    <text evidence="1">Involved in the regulation of the intracellular balance of NAD and NADP, and is a key enzyme in the biosynthesis of NADP. Catalyzes specifically the phosphorylation on 2'-hydroxyl of the adenosine moiety of NAD to yield NADP.</text>
</comment>
<comment type="catalytic activity">
    <reaction evidence="1">
        <text>NAD(+) + ATP = ADP + NADP(+) + H(+)</text>
        <dbReference type="Rhea" id="RHEA:18629"/>
        <dbReference type="ChEBI" id="CHEBI:15378"/>
        <dbReference type="ChEBI" id="CHEBI:30616"/>
        <dbReference type="ChEBI" id="CHEBI:57540"/>
        <dbReference type="ChEBI" id="CHEBI:58349"/>
        <dbReference type="ChEBI" id="CHEBI:456216"/>
        <dbReference type="EC" id="2.7.1.23"/>
    </reaction>
</comment>
<comment type="cofactor">
    <cofactor evidence="1">
        <name>a divalent metal cation</name>
        <dbReference type="ChEBI" id="CHEBI:60240"/>
    </cofactor>
</comment>
<comment type="subcellular location">
    <subcellularLocation>
        <location evidence="1">Cytoplasm</location>
    </subcellularLocation>
</comment>
<comment type="similarity">
    <text evidence="1">Belongs to the NAD kinase family.</text>
</comment>
<evidence type="ECO:0000255" key="1">
    <source>
        <dbReference type="HAMAP-Rule" id="MF_00361"/>
    </source>
</evidence>
<proteinExistence type="inferred from homology"/>
<organism>
    <name type="scientific">Staphylococcus aureus (strain JH1)</name>
    <dbReference type="NCBI Taxonomy" id="359787"/>
    <lineage>
        <taxon>Bacteria</taxon>
        <taxon>Bacillati</taxon>
        <taxon>Bacillota</taxon>
        <taxon>Bacilli</taxon>
        <taxon>Bacillales</taxon>
        <taxon>Staphylococcaceae</taxon>
        <taxon>Staphylococcus</taxon>
    </lineage>
</organism>
<keyword id="KW-0067">ATP-binding</keyword>
<keyword id="KW-0963">Cytoplasm</keyword>
<keyword id="KW-0418">Kinase</keyword>
<keyword id="KW-0520">NAD</keyword>
<keyword id="KW-0521">NADP</keyword>
<keyword id="KW-0547">Nucleotide-binding</keyword>
<keyword id="KW-0808">Transferase</keyword>
<dbReference type="EC" id="2.7.1.23" evidence="1"/>
<dbReference type="EMBL" id="CP000736">
    <property type="protein sequence ID" value="ABR51880.1"/>
    <property type="molecule type" value="Genomic_DNA"/>
</dbReference>
<dbReference type="SMR" id="A6U0B2"/>
<dbReference type="KEGG" id="sah:SaurJH1_1024"/>
<dbReference type="HOGENOM" id="CLU_008831_0_3_9"/>
<dbReference type="GO" id="GO:0005737">
    <property type="term" value="C:cytoplasm"/>
    <property type="evidence" value="ECO:0007669"/>
    <property type="project" value="UniProtKB-SubCell"/>
</dbReference>
<dbReference type="GO" id="GO:0005524">
    <property type="term" value="F:ATP binding"/>
    <property type="evidence" value="ECO:0007669"/>
    <property type="project" value="UniProtKB-KW"/>
</dbReference>
<dbReference type="GO" id="GO:0046872">
    <property type="term" value="F:metal ion binding"/>
    <property type="evidence" value="ECO:0007669"/>
    <property type="project" value="UniProtKB-UniRule"/>
</dbReference>
<dbReference type="GO" id="GO:0051287">
    <property type="term" value="F:NAD binding"/>
    <property type="evidence" value="ECO:0007669"/>
    <property type="project" value="UniProtKB-ARBA"/>
</dbReference>
<dbReference type="GO" id="GO:0003951">
    <property type="term" value="F:NAD+ kinase activity"/>
    <property type="evidence" value="ECO:0007669"/>
    <property type="project" value="UniProtKB-UniRule"/>
</dbReference>
<dbReference type="GO" id="GO:0019674">
    <property type="term" value="P:NAD metabolic process"/>
    <property type="evidence" value="ECO:0007669"/>
    <property type="project" value="InterPro"/>
</dbReference>
<dbReference type="GO" id="GO:0006741">
    <property type="term" value="P:NADP biosynthetic process"/>
    <property type="evidence" value="ECO:0007669"/>
    <property type="project" value="UniProtKB-UniRule"/>
</dbReference>
<dbReference type="FunFam" id="2.60.200.30:FF:000002">
    <property type="entry name" value="NAD kinase"/>
    <property type="match status" value="1"/>
</dbReference>
<dbReference type="Gene3D" id="3.40.50.10330">
    <property type="entry name" value="Probable inorganic polyphosphate/atp-NAD kinase, domain 1"/>
    <property type="match status" value="1"/>
</dbReference>
<dbReference type="Gene3D" id="2.60.200.30">
    <property type="entry name" value="Probable inorganic polyphosphate/atp-NAD kinase, domain 2"/>
    <property type="match status" value="1"/>
</dbReference>
<dbReference type="HAMAP" id="MF_00361">
    <property type="entry name" value="NAD_kinase"/>
    <property type="match status" value="1"/>
</dbReference>
<dbReference type="InterPro" id="IPR017438">
    <property type="entry name" value="ATP-NAD_kinase_N"/>
</dbReference>
<dbReference type="InterPro" id="IPR017437">
    <property type="entry name" value="ATP-NAD_kinase_PpnK-typ_C"/>
</dbReference>
<dbReference type="InterPro" id="IPR016064">
    <property type="entry name" value="NAD/diacylglycerol_kinase_sf"/>
</dbReference>
<dbReference type="InterPro" id="IPR002504">
    <property type="entry name" value="NADK"/>
</dbReference>
<dbReference type="NCBIfam" id="NF003424">
    <property type="entry name" value="PRK04885.1"/>
    <property type="match status" value="1"/>
</dbReference>
<dbReference type="PANTHER" id="PTHR20275">
    <property type="entry name" value="NAD KINASE"/>
    <property type="match status" value="1"/>
</dbReference>
<dbReference type="PANTHER" id="PTHR20275:SF0">
    <property type="entry name" value="NAD KINASE"/>
    <property type="match status" value="1"/>
</dbReference>
<dbReference type="Pfam" id="PF01513">
    <property type="entry name" value="NAD_kinase"/>
    <property type="match status" value="1"/>
</dbReference>
<dbReference type="Pfam" id="PF20143">
    <property type="entry name" value="NAD_kinase_C"/>
    <property type="match status" value="1"/>
</dbReference>
<dbReference type="SUPFAM" id="SSF111331">
    <property type="entry name" value="NAD kinase/diacylglycerol kinase-like"/>
    <property type="match status" value="1"/>
</dbReference>
<gene>
    <name evidence="1" type="primary">nadK</name>
    <name type="ordered locus">SaurJH1_1024</name>
</gene>
<protein>
    <recommendedName>
        <fullName evidence="1">NAD kinase</fullName>
        <ecNumber evidence="1">2.7.1.23</ecNumber>
    </recommendedName>
    <alternativeName>
        <fullName evidence="1">ATP-dependent NAD kinase</fullName>
    </alternativeName>
</protein>
<reference key="1">
    <citation type="submission" date="2007-06" db="EMBL/GenBank/DDBJ databases">
        <title>Complete sequence of chromosome of Staphylococcus aureus subsp. aureus JH1.</title>
        <authorList>
            <consortium name="US DOE Joint Genome Institute"/>
            <person name="Copeland A."/>
            <person name="Lucas S."/>
            <person name="Lapidus A."/>
            <person name="Barry K."/>
            <person name="Detter J.C."/>
            <person name="Glavina del Rio T."/>
            <person name="Hammon N."/>
            <person name="Israni S."/>
            <person name="Dalin E."/>
            <person name="Tice H."/>
            <person name="Pitluck S."/>
            <person name="Chain P."/>
            <person name="Malfatti S."/>
            <person name="Shin M."/>
            <person name="Vergez L."/>
            <person name="Schmutz J."/>
            <person name="Larimer F."/>
            <person name="Land M."/>
            <person name="Hauser L."/>
            <person name="Kyrpides N."/>
            <person name="Ivanova N."/>
            <person name="Tomasz A."/>
            <person name="Richardson P."/>
        </authorList>
    </citation>
    <scope>NUCLEOTIDE SEQUENCE [LARGE SCALE GENOMIC DNA]</scope>
    <source>
        <strain>JH1</strain>
    </source>
</reference>
<feature type="chain" id="PRO_1000079522" description="NAD kinase">
    <location>
        <begin position="1"/>
        <end position="269"/>
    </location>
</feature>
<feature type="active site" description="Proton acceptor" evidence="1">
    <location>
        <position position="45"/>
    </location>
</feature>
<feature type="binding site" evidence="1">
    <location>
        <begin position="45"/>
        <end position="46"/>
    </location>
    <ligand>
        <name>NAD(+)</name>
        <dbReference type="ChEBI" id="CHEBI:57540"/>
    </ligand>
</feature>
<feature type="binding site" evidence="1">
    <location>
        <begin position="122"/>
        <end position="123"/>
    </location>
    <ligand>
        <name>NAD(+)</name>
        <dbReference type="ChEBI" id="CHEBI:57540"/>
    </ligand>
</feature>
<feature type="binding site" evidence="1">
    <location>
        <position position="149"/>
    </location>
    <ligand>
        <name>NAD(+)</name>
        <dbReference type="ChEBI" id="CHEBI:57540"/>
    </ligand>
</feature>
<feature type="binding site" evidence="1">
    <location>
        <position position="151"/>
    </location>
    <ligand>
        <name>NAD(+)</name>
        <dbReference type="ChEBI" id="CHEBI:57540"/>
    </ligand>
</feature>
<feature type="binding site" evidence="1">
    <location>
        <position position="186"/>
    </location>
    <ligand>
        <name>NAD(+)</name>
        <dbReference type="ChEBI" id="CHEBI:57540"/>
    </ligand>
</feature>
<name>NADK_STAA2</name>